<accession>C5B7H1</accession>
<evidence type="ECO:0000255" key="1">
    <source>
        <dbReference type="HAMAP-Rule" id="MF_01224"/>
    </source>
</evidence>
<keyword id="KW-0456">Lyase</keyword>
<keyword id="KW-0501">Molybdenum cofactor biosynthesis</keyword>
<feature type="chain" id="PRO_1000213989" description="Cyclic pyranopterin monophosphate synthase">
    <location>
        <begin position="1"/>
        <end position="161"/>
    </location>
</feature>
<feature type="active site" evidence="1">
    <location>
        <position position="128"/>
    </location>
</feature>
<feature type="binding site" evidence="1">
    <location>
        <begin position="75"/>
        <end position="77"/>
    </location>
    <ligand>
        <name>substrate</name>
    </ligand>
</feature>
<feature type="binding site" evidence="1">
    <location>
        <begin position="113"/>
        <end position="114"/>
    </location>
    <ligand>
        <name>substrate</name>
    </ligand>
</feature>
<comment type="function">
    <text evidence="1">Catalyzes the conversion of (8S)-3',8-cyclo-7,8-dihydroguanosine 5'-triphosphate to cyclic pyranopterin monophosphate (cPMP).</text>
</comment>
<comment type="catalytic activity">
    <reaction evidence="1">
        <text>(8S)-3',8-cyclo-7,8-dihydroguanosine 5'-triphosphate = cyclic pyranopterin phosphate + diphosphate</text>
        <dbReference type="Rhea" id="RHEA:49580"/>
        <dbReference type="ChEBI" id="CHEBI:33019"/>
        <dbReference type="ChEBI" id="CHEBI:59648"/>
        <dbReference type="ChEBI" id="CHEBI:131766"/>
        <dbReference type="EC" id="4.6.1.17"/>
    </reaction>
</comment>
<comment type="pathway">
    <text evidence="1">Cofactor biosynthesis; molybdopterin biosynthesis.</text>
</comment>
<comment type="subunit">
    <text evidence="1">Homohexamer; trimer of dimers.</text>
</comment>
<comment type="similarity">
    <text evidence="1">Belongs to the MoaC family.</text>
</comment>
<dbReference type="EC" id="4.6.1.17" evidence="1"/>
<dbReference type="EMBL" id="CP001600">
    <property type="protein sequence ID" value="ACR69807.1"/>
    <property type="molecule type" value="Genomic_DNA"/>
</dbReference>
<dbReference type="RefSeq" id="WP_015871915.1">
    <property type="nucleotide sequence ID" value="NZ_CP169062.1"/>
</dbReference>
<dbReference type="SMR" id="C5B7H1"/>
<dbReference type="STRING" id="67780.B6E78_05215"/>
<dbReference type="GeneID" id="69539539"/>
<dbReference type="KEGG" id="eic:NT01EI_2639"/>
<dbReference type="PATRIC" id="fig|634503.3.peg.2354"/>
<dbReference type="HOGENOM" id="CLU_074693_1_1_6"/>
<dbReference type="OrthoDB" id="9794429at2"/>
<dbReference type="UniPathway" id="UPA00344"/>
<dbReference type="Proteomes" id="UP000001485">
    <property type="component" value="Chromosome"/>
</dbReference>
<dbReference type="GO" id="GO:0061799">
    <property type="term" value="F:cyclic pyranopterin monophosphate synthase activity"/>
    <property type="evidence" value="ECO:0007669"/>
    <property type="project" value="UniProtKB-UniRule"/>
</dbReference>
<dbReference type="GO" id="GO:0006777">
    <property type="term" value="P:Mo-molybdopterin cofactor biosynthetic process"/>
    <property type="evidence" value="ECO:0007669"/>
    <property type="project" value="UniProtKB-UniRule"/>
</dbReference>
<dbReference type="CDD" id="cd01420">
    <property type="entry name" value="MoaC_PE"/>
    <property type="match status" value="1"/>
</dbReference>
<dbReference type="FunFam" id="3.30.70.640:FF:000001">
    <property type="entry name" value="Cyclic pyranopterin monophosphate synthase"/>
    <property type="match status" value="1"/>
</dbReference>
<dbReference type="Gene3D" id="3.30.70.640">
    <property type="entry name" value="Molybdopterin cofactor biosynthesis C (MoaC) domain"/>
    <property type="match status" value="1"/>
</dbReference>
<dbReference type="HAMAP" id="MF_01224_B">
    <property type="entry name" value="MoaC_B"/>
    <property type="match status" value="1"/>
</dbReference>
<dbReference type="InterPro" id="IPR023045">
    <property type="entry name" value="MoaC"/>
</dbReference>
<dbReference type="InterPro" id="IPR047594">
    <property type="entry name" value="MoaC_bact/euk"/>
</dbReference>
<dbReference type="InterPro" id="IPR036522">
    <property type="entry name" value="MoaC_sf"/>
</dbReference>
<dbReference type="InterPro" id="IPR050105">
    <property type="entry name" value="MoCo_biosynth_MoaA/MoaC"/>
</dbReference>
<dbReference type="InterPro" id="IPR002820">
    <property type="entry name" value="Mopterin_CF_biosynth-C_dom"/>
</dbReference>
<dbReference type="NCBIfam" id="TIGR00581">
    <property type="entry name" value="moaC"/>
    <property type="match status" value="1"/>
</dbReference>
<dbReference type="NCBIfam" id="NF006870">
    <property type="entry name" value="PRK09364.1"/>
    <property type="match status" value="1"/>
</dbReference>
<dbReference type="PANTHER" id="PTHR22960">
    <property type="entry name" value="MOLYBDOPTERIN COFACTOR SYNTHESIS PROTEIN A"/>
    <property type="match status" value="1"/>
</dbReference>
<dbReference type="Pfam" id="PF01967">
    <property type="entry name" value="MoaC"/>
    <property type="match status" value="1"/>
</dbReference>
<dbReference type="SUPFAM" id="SSF55040">
    <property type="entry name" value="Molybdenum cofactor biosynthesis protein C, MoaC"/>
    <property type="match status" value="1"/>
</dbReference>
<organism>
    <name type="scientific">Edwardsiella ictaluri (strain 93-146)</name>
    <dbReference type="NCBI Taxonomy" id="634503"/>
    <lineage>
        <taxon>Bacteria</taxon>
        <taxon>Pseudomonadati</taxon>
        <taxon>Pseudomonadota</taxon>
        <taxon>Gammaproteobacteria</taxon>
        <taxon>Enterobacterales</taxon>
        <taxon>Hafniaceae</taxon>
        <taxon>Edwardsiella</taxon>
    </lineage>
</organism>
<proteinExistence type="inferred from homology"/>
<sequence length="161" mass="17227">MSQLTHINAAGEAHMVDVSAKAETVREARAEAYVTMRQDTLAMIIDGKHPKGDVFATARIAGIQAAKSTWQLIPLCHPLLLSKVEVTLSVEPVHSRVRIETCCRLCGKTGVEMEALSAASVAALTIYDMCKAVQKDMVIGPVRLLAKSGGKSGDFHAGEVQ</sequence>
<reference key="1">
    <citation type="submission" date="2009-03" db="EMBL/GenBank/DDBJ databases">
        <title>Complete genome sequence of Edwardsiella ictaluri 93-146.</title>
        <authorList>
            <person name="Williams M.L."/>
            <person name="Gillaspy A.F."/>
            <person name="Dyer D.W."/>
            <person name="Thune R.L."/>
            <person name="Waldbieser G.C."/>
            <person name="Schuster S.C."/>
            <person name="Gipson J."/>
            <person name="Zaitshik J."/>
            <person name="Landry C."/>
            <person name="Lawrence M.L."/>
        </authorList>
    </citation>
    <scope>NUCLEOTIDE SEQUENCE [LARGE SCALE GENOMIC DNA]</scope>
    <source>
        <strain>93-146</strain>
    </source>
</reference>
<name>MOAC_EDWI9</name>
<gene>
    <name evidence="1" type="primary">moaC</name>
    <name type="ordered locus">NT01EI_2639</name>
</gene>
<protein>
    <recommendedName>
        <fullName evidence="1">Cyclic pyranopterin monophosphate synthase</fullName>
        <ecNumber evidence="1">4.6.1.17</ecNumber>
    </recommendedName>
    <alternativeName>
        <fullName evidence="1">Molybdenum cofactor biosynthesis protein C</fullName>
    </alternativeName>
</protein>